<accession>Q9RDK1</accession>
<feature type="chain" id="PRO_0000189786" description="Gamma-glutamyl phosphate reductase">
    <location>
        <begin position="1"/>
        <end position="428"/>
    </location>
</feature>
<dbReference type="EC" id="1.2.1.41" evidence="1"/>
<dbReference type="EMBL" id="AL939113">
    <property type="protein sequence ID" value="CAB66263.1"/>
    <property type="molecule type" value="Genomic_DNA"/>
</dbReference>
<dbReference type="RefSeq" id="NP_626823.1">
    <property type="nucleotide sequence ID" value="NC_003888.3"/>
</dbReference>
<dbReference type="RefSeq" id="WP_003976218.1">
    <property type="nucleotide sequence ID" value="NZ_VNID01000001.1"/>
</dbReference>
<dbReference type="SMR" id="Q9RDK1"/>
<dbReference type="FunCoup" id="Q9RDK1">
    <property type="interactions" value="365"/>
</dbReference>
<dbReference type="STRING" id="100226.gene:17760189"/>
<dbReference type="PaxDb" id="100226-SCO2585"/>
<dbReference type="KEGG" id="sco:SCO2585"/>
<dbReference type="PATRIC" id="fig|100226.15.peg.2630"/>
<dbReference type="eggNOG" id="COG0014">
    <property type="taxonomic scope" value="Bacteria"/>
</dbReference>
<dbReference type="HOGENOM" id="CLU_030231_0_0_11"/>
<dbReference type="InParanoid" id="Q9RDK1"/>
<dbReference type="OrthoDB" id="9809970at2"/>
<dbReference type="PhylomeDB" id="Q9RDK1"/>
<dbReference type="UniPathway" id="UPA00098">
    <property type="reaction ID" value="UER00360"/>
</dbReference>
<dbReference type="Proteomes" id="UP000001973">
    <property type="component" value="Chromosome"/>
</dbReference>
<dbReference type="GO" id="GO:0005737">
    <property type="term" value="C:cytoplasm"/>
    <property type="evidence" value="ECO:0007669"/>
    <property type="project" value="UniProtKB-SubCell"/>
</dbReference>
<dbReference type="GO" id="GO:0004350">
    <property type="term" value="F:glutamate-5-semialdehyde dehydrogenase activity"/>
    <property type="evidence" value="ECO:0000318"/>
    <property type="project" value="GO_Central"/>
</dbReference>
<dbReference type="GO" id="GO:0050661">
    <property type="term" value="F:NADP binding"/>
    <property type="evidence" value="ECO:0007669"/>
    <property type="project" value="InterPro"/>
</dbReference>
<dbReference type="GO" id="GO:0055129">
    <property type="term" value="P:L-proline biosynthetic process"/>
    <property type="evidence" value="ECO:0007669"/>
    <property type="project" value="UniProtKB-UniRule"/>
</dbReference>
<dbReference type="CDD" id="cd07079">
    <property type="entry name" value="ALDH_F18-19_ProA-GPR"/>
    <property type="match status" value="1"/>
</dbReference>
<dbReference type="FunFam" id="3.40.309.10:FF:000006">
    <property type="entry name" value="Gamma-glutamyl phosphate reductase"/>
    <property type="match status" value="1"/>
</dbReference>
<dbReference type="Gene3D" id="3.40.605.10">
    <property type="entry name" value="Aldehyde Dehydrogenase, Chain A, domain 1"/>
    <property type="match status" value="1"/>
</dbReference>
<dbReference type="Gene3D" id="3.40.309.10">
    <property type="entry name" value="Aldehyde Dehydrogenase, Chain A, domain 2"/>
    <property type="match status" value="1"/>
</dbReference>
<dbReference type="HAMAP" id="MF_00412">
    <property type="entry name" value="ProA"/>
    <property type="match status" value="1"/>
</dbReference>
<dbReference type="InterPro" id="IPR016161">
    <property type="entry name" value="Ald_DH/histidinol_DH"/>
</dbReference>
<dbReference type="InterPro" id="IPR016163">
    <property type="entry name" value="Ald_DH_C"/>
</dbReference>
<dbReference type="InterPro" id="IPR016162">
    <property type="entry name" value="Ald_DH_N"/>
</dbReference>
<dbReference type="InterPro" id="IPR015590">
    <property type="entry name" value="Aldehyde_DH_dom"/>
</dbReference>
<dbReference type="InterPro" id="IPR020593">
    <property type="entry name" value="G-glutamylP_reductase_CS"/>
</dbReference>
<dbReference type="InterPro" id="IPR012134">
    <property type="entry name" value="Glu-5-SA_DH"/>
</dbReference>
<dbReference type="InterPro" id="IPR000965">
    <property type="entry name" value="GPR_dom"/>
</dbReference>
<dbReference type="NCBIfam" id="NF001221">
    <property type="entry name" value="PRK00197.1"/>
    <property type="match status" value="1"/>
</dbReference>
<dbReference type="NCBIfam" id="TIGR00407">
    <property type="entry name" value="proA"/>
    <property type="match status" value="1"/>
</dbReference>
<dbReference type="PANTHER" id="PTHR11063:SF8">
    <property type="entry name" value="DELTA-1-PYRROLINE-5-CARBOXYLATE SYNTHASE"/>
    <property type="match status" value="1"/>
</dbReference>
<dbReference type="PANTHER" id="PTHR11063">
    <property type="entry name" value="GLUTAMATE SEMIALDEHYDE DEHYDROGENASE"/>
    <property type="match status" value="1"/>
</dbReference>
<dbReference type="Pfam" id="PF00171">
    <property type="entry name" value="Aldedh"/>
    <property type="match status" value="1"/>
</dbReference>
<dbReference type="PIRSF" id="PIRSF000151">
    <property type="entry name" value="GPR"/>
    <property type="match status" value="1"/>
</dbReference>
<dbReference type="SUPFAM" id="SSF53720">
    <property type="entry name" value="ALDH-like"/>
    <property type="match status" value="1"/>
</dbReference>
<dbReference type="PROSITE" id="PS01223">
    <property type="entry name" value="PROA"/>
    <property type="match status" value="1"/>
</dbReference>
<keyword id="KW-0028">Amino-acid biosynthesis</keyword>
<keyword id="KW-0963">Cytoplasm</keyword>
<keyword id="KW-0521">NADP</keyword>
<keyword id="KW-0560">Oxidoreductase</keyword>
<keyword id="KW-0641">Proline biosynthesis</keyword>
<keyword id="KW-1185">Reference proteome</keyword>
<gene>
    <name evidence="1" type="primary">proA</name>
    <name type="ordered locus">SCO2585</name>
    <name type="ORF">SCC123.23c</name>
</gene>
<proteinExistence type="inferred from homology"/>
<reference key="1">
    <citation type="journal article" date="2002" name="Nature">
        <title>Complete genome sequence of the model actinomycete Streptomyces coelicolor A3(2).</title>
        <authorList>
            <person name="Bentley S.D."/>
            <person name="Chater K.F."/>
            <person name="Cerdeno-Tarraga A.-M."/>
            <person name="Challis G.L."/>
            <person name="Thomson N.R."/>
            <person name="James K.D."/>
            <person name="Harris D.E."/>
            <person name="Quail M.A."/>
            <person name="Kieser H."/>
            <person name="Harper D."/>
            <person name="Bateman A."/>
            <person name="Brown S."/>
            <person name="Chandra G."/>
            <person name="Chen C.W."/>
            <person name="Collins M."/>
            <person name="Cronin A."/>
            <person name="Fraser A."/>
            <person name="Goble A."/>
            <person name="Hidalgo J."/>
            <person name="Hornsby T."/>
            <person name="Howarth S."/>
            <person name="Huang C.-H."/>
            <person name="Kieser T."/>
            <person name="Larke L."/>
            <person name="Murphy L.D."/>
            <person name="Oliver K."/>
            <person name="O'Neil S."/>
            <person name="Rabbinowitsch E."/>
            <person name="Rajandream M.A."/>
            <person name="Rutherford K.M."/>
            <person name="Rutter S."/>
            <person name="Seeger K."/>
            <person name="Saunders D."/>
            <person name="Sharp S."/>
            <person name="Squares R."/>
            <person name="Squares S."/>
            <person name="Taylor K."/>
            <person name="Warren T."/>
            <person name="Wietzorrek A."/>
            <person name="Woodward J.R."/>
            <person name="Barrell B.G."/>
            <person name="Parkhill J."/>
            <person name="Hopwood D.A."/>
        </authorList>
    </citation>
    <scope>NUCLEOTIDE SEQUENCE [LARGE SCALE GENOMIC DNA]</scope>
    <source>
        <strain>ATCC BAA-471 / A3(2) / M145</strain>
    </source>
</reference>
<name>PROA_STRCO</name>
<organism>
    <name type="scientific">Streptomyces coelicolor (strain ATCC BAA-471 / A3(2) / M145)</name>
    <dbReference type="NCBI Taxonomy" id="100226"/>
    <lineage>
        <taxon>Bacteria</taxon>
        <taxon>Bacillati</taxon>
        <taxon>Actinomycetota</taxon>
        <taxon>Actinomycetes</taxon>
        <taxon>Kitasatosporales</taxon>
        <taxon>Streptomycetaceae</taxon>
        <taxon>Streptomyces</taxon>
        <taxon>Streptomyces albidoflavus group</taxon>
    </lineage>
</organism>
<sequence length="428" mass="45075">MTTLSPYDSMSPVTRAAYRAKSAAADLAPLPRAAKDDALLAVADALEVRTSEIVEANAQDVAKARAAGTSEAIVDRLTLTPERVRAIASDVRDVVALPDPVGEIVRGSTLPNGIDLRQVRVPLGVVGIIYEGRPNVTVDAAALCLKSGNAVLLRGSSSAYRSNTALVRVVRDAVGGAGLPADAVQLVPGESRESVRELMRARGLVDVLIPRGGASLISTVVQESTVPVIETGTGNCHVYVDAHADLDMAVDILINSKAQRVGVCNAAETLLVHQDVAAEFLPRALAALAEAGVTVHADERVMAHAKDSGANVVEATPEDWETEYLSYDIAAAVVDSLDRAVEHIRLWTSGHTEAIVTTSQQAARRFTQLVDSTTVAVNTSTRFTDGGQFGFGAEIGISTQKLHARGPMGLPELTSTKYIVTGDGHVRR</sequence>
<evidence type="ECO:0000255" key="1">
    <source>
        <dbReference type="HAMAP-Rule" id="MF_00412"/>
    </source>
</evidence>
<protein>
    <recommendedName>
        <fullName evidence="1">Gamma-glutamyl phosphate reductase</fullName>
        <shortName evidence="1">GPR</shortName>
        <ecNumber evidence="1">1.2.1.41</ecNumber>
    </recommendedName>
    <alternativeName>
        <fullName evidence="1">Glutamate-5-semialdehyde dehydrogenase</fullName>
    </alternativeName>
    <alternativeName>
        <fullName evidence="1">Glutamyl-gamma-semialdehyde dehydrogenase</fullName>
        <shortName evidence="1">GSA dehydrogenase</shortName>
    </alternativeName>
</protein>
<comment type="function">
    <text evidence="1">Catalyzes the NADPH-dependent reduction of L-glutamate 5-phosphate into L-glutamate 5-semialdehyde and phosphate. The product spontaneously undergoes cyclization to form 1-pyrroline-5-carboxylate.</text>
</comment>
<comment type="catalytic activity">
    <reaction evidence="1">
        <text>L-glutamate 5-semialdehyde + phosphate + NADP(+) = L-glutamyl 5-phosphate + NADPH + H(+)</text>
        <dbReference type="Rhea" id="RHEA:19541"/>
        <dbReference type="ChEBI" id="CHEBI:15378"/>
        <dbReference type="ChEBI" id="CHEBI:43474"/>
        <dbReference type="ChEBI" id="CHEBI:57783"/>
        <dbReference type="ChEBI" id="CHEBI:58066"/>
        <dbReference type="ChEBI" id="CHEBI:58274"/>
        <dbReference type="ChEBI" id="CHEBI:58349"/>
        <dbReference type="EC" id="1.2.1.41"/>
    </reaction>
</comment>
<comment type="pathway">
    <text evidence="1">Amino-acid biosynthesis; L-proline biosynthesis; L-glutamate 5-semialdehyde from L-glutamate: step 2/2.</text>
</comment>
<comment type="subcellular location">
    <subcellularLocation>
        <location evidence="1">Cytoplasm</location>
    </subcellularLocation>
</comment>
<comment type="similarity">
    <text evidence="1">Belongs to the gamma-glutamyl phosphate reductase family.</text>
</comment>